<keyword id="KW-1015">Disulfide bond</keyword>
<keyword id="KW-0372">Hormone</keyword>
<keyword id="KW-0479">Metal-binding</keyword>
<keyword id="KW-0964">Secreted</keyword>
<keyword id="KW-0732">Signal</keyword>
<keyword id="KW-0862">Zinc</keyword>
<organism>
    <name type="scientific">Heteropneustes fossilis</name>
    <name type="common">Stinging catfish</name>
    <dbReference type="NCBI Taxonomy" id="93621"/>
    <lineage>
        <taxon>Eukaryota</taxon>
        <taxon>Metazoa</taxon>
        <taxon>Chordata</taxon>
        <taxon>Craniata</taxon>
        <taxon>Vertebrata</taxon>
        <taxon>Euteleostomi</taxon>
        <taxon>Actinopterygii</taxon>
        <taxon>Neopterygii</taxon>
        <taxon>Teleostei</taxon>
        <taxon>Ostariophysi</taxon>
        <taxon>Siluriformes</taxon>
        <taxon>Heteropneustidae</taxon>
        <taxon>Heteropneustes</taxon>
    </lineage>
</organism>
<sequence length="200" mass="22538">MARVLVVLSVVVASLFFSQGATFENQRLFNNAVIRVQHLHQLAAKMMDDFEEALLPEERKQLSKIFPLSFCNSDSIEAPAGKDETQKSSVLKLLHTSYRLIESWEFPSKNLGNPNHISEKLADLKMGIGVLIEGCVDGQTSLDENDAFAPPFEDFYQTLSEGNLKKSFRLLSCFKKDMHKVETYLSVAKCRRSLDSNCTL</sequence>
<gene>
    <name type="primary">gh</name>
</gene>
<reference key="1">
    <citation type="submission" date="1999-05" db="EMBL/GenBank/DDBJ databases">
        <title>Heteropneustes fossilis growth hormone mRNA.</title>
        <authorList>
            <person name="Anathy V."/>
            <person name="Pandian T.J."/>
            <person name="Mathavan S."/>
        </authorList>
    </citation>
    <scope>NUCLEOTIDE SEQUENCE [MRNA]</scope>
    <source>
        <tissue>Pituitary</tissue>
    </source>
</reference>
<comment type="function">
    <text>Growth hormone plays an important role in growth control and is involved in the regulation of several anabolic processes. Implicated as an osmoregulatory substance important for seawater adaptation.</text>
</comment>
<comment type="subcellular location">
    <subcellularLocation>
        <location>Secreted</location>
    </subcellularLocation>
</comment>
<comment type="similarity">
    <text evidence="2">Belongs to the somatotropin/prolactin family.</text>
</comment>
<feature type="signal peptide" evidence="1">
    <location>
        <begin position="1"/>
        <end position="22"/>
    </location>
</feature>
<feature type="chain" id="PRO_0000033024" description="Somatotropin">
    <location>
        <begin position="23"/>
        <end position="200"/>
    </location>
</feature>
<feature type="binding site" evidence="1">
    <location>
        <position position="38"/>
    </location>
    <ligand>
        <name>Zn(2+)</name>
        <dbReference type="ChEBI" id="CHEBI:29105"/>
    </ligand>
</feature>
<feature type="binding site" evidence="1">
    <location>
        <position position="182"/>
    </location>
    <ligand>
        <name>Zn(2+)</name>
        <dbReference type="ChEBI" id="CHEBI:29105"/>
    </ligand>
</feature>
<feature type="disulfide bond" evidence="1">
    <location>
        <begin position="71"/>
        <end position="173"/>
    </location>
</feature>
<feature type="disulfide bond" evidence="1">
    <location>
        <begin position="190"/>
        <end position="198"/>
    </location>
</feature>
<protein>
    <recommendedName>
        <fullName>Somatotropin</fullName>
    </recommendedName>
    <alternativeName>
        <fullName>Growth hormone</fullName>
    </alternativeName>
</protein>
<dbReference type="EMBL" id="AF147792">
    <property type="protein sequence ID" value="AAD33070.1"/>
    <property type="molecule type" value="mRNA"/>
</dbReference>
<dbReference type="SMR" id="Q9W6R8"/>
<dbReference type="GO" id="GO:0005615">
    <property type="term" value="C:extracellular space"/>
    <property type="evidence" value="ECO:0000250"/>
    <property type="project" value="UniProtKB"/>
</dbReference>
<dbReference type="GO" id="GO:0070186">
    <property type="term" value="F:growth hormone activity"/>
    <property type="evidence" value="ECO:0007669"/>
    <property type="project" value="TreeGrafter"/>
</dbReference>
<dbReference type="GO" id="GO:0005131">
    <property type="term" value="F:growth hormone receptor binding"/>
    <property type="evidence" value="ECO:0007669"/>
    <property type="project" value="InterPro"/>
</dbReference>
<dbReference type="GO" id="GO:0046872">
    <property type="term" value="F:metal ion binding"/>
    <property type="evidence" value="ECO:0007669"/>
    <property type="project" value="UniProtKB-KW"/>
</dbReference>
<dbReference type="GO" id="GO:0048513">
    <property type="term" value="P:animal organ development"/>
    <property type="evidence" value="ECO:0007669"/>
    <property type="project" value="TreeGrafter"/>
</dbReference>
<dbReference type="GO" id="GO:0060396">
    <property type="term" value="P:growth hormone receptor signaling pathway"/>
    <property type="evidence" value="ECO:0007669"/>
    <property type="project" value="TreeGrafter"/>
</dbReference>
<dbReference type="GO" id="GO:0042538">
    <property type="term" value="P:hyperosmotic salinity response"/>
    <property type="evidence" value="ECO:0000250"/>
    <property type="project" value="UniProtKB"/>
</dbReference>
<dbReference type="GO" id="GO:0045927">
    <property type="term" value="P:positive regulation of growth"/>
    <property type="evidence" value="ECO:0007669"/>
    <property type="project" value="TreeGrafter"/>
</dbReference>
<dbReference type="GO" id="GO:0046427">
    <property type="term" value="P:positive regulation of receptor signaling pathway via JAK-STAT"/>
    <property type="evidence" value="ECO:0007669"/>
    <property type="project" value="TreeGrafter"/>
</dbReference>
<dbReference type="GO" id="GO:1903576">
    <property type="term" value="P:response to L-arginine"/>
    <property type="evidence" value="ECO:0000250"/>
    <property type="project" value="UniProtKB"/>
</dbReference>
<dbReference type="GO" id="GO:0043434">
    <property type="term" value="P:response to peptide hormone"/>
    <property type="evidence" value="ECO:0000250"/>
    <property type="project" value="UniProtKB"/>
</dbReference>
<dbReference type="GO" id="GO:0042594">
    <property type="term" value="P:response to starvation"/>
    <property type="evidence" value="ECO:0000250"/>
    <property type="project" value="UniProtKB"/>
</dbReference>
<dbReference type="CDD" id="cd10285">
    <property type="entry name" value="somatotropin_like"/>
    <property type="match status" value="1"/>
</dbReference>
<dbReference type="FunFam" id="1.20.1250.10:FF:000009">
    <property type="entry name" value="Growth hormone"/>
    <property type="match status" value="1"/>
</dbReference>
<dbReference type="Gene3D" id="1.20.1250.10">
    <property type="match status" value="1"/>
</dbReference>
<dbReference type="InterPro" id="IPR009079">
    <property type="entry name" value="4_helix_cytokine-like_core"/>
</dbReference>
<dbReference type="InterPro" id="IPR034975">
    <property type="entry name" value="Somatotropin"/>
</dbReference>
<dbReference type="InterPro" id="IPR001400">
    <property type="entry name" value="Somatotropin/Prolactin"/>
</dbReference>
<dbReference type="InterPro" id="IPR018116">
    <property type="entry name" value="Somatotropin_CS"/>
</dbReference>
<dbReference type="PANTHER" id="PTHR11417:SF2">
    <property type="entry name" value="SOMATOTROPIN"/>
    <property type="match status" value="1"/>
</dbReference>
<dbReference type="PANTHER" id="PTHR11417">
    <property type="entry name" value="SOMATOTROPIN,PROLACTIN"/>
    <property type="match status" value="1"/>
</dbReference>
<dbReference type="Pfam" id="PF00103">
    <property type="entry name" value="Hormone_1"/>
    <property type="match status" value="1"/>
</dbReference>
<dbReference type="PRINTS" id="PR00836">
    <property type="entry name" value="SOMATOTROPIN"/>
</dbReference>
<dbReference type="SUPFAM" id="SSF47266">
    <property type="entry name" value="4-helical cytokines"/>
    <property type="match status" value="1"/>
</dbReference>
<dbReference type="PROSITE" id="PS00266">
    <property type="entry name" value="SOMATOTROPIN_1"/>
    <property type="match status" value="1"/>
</dbReference>
<dbReference type="PROSITE" id="PS00338">
    <property type="entry name" value="SOMATOTROPIN_2"/>
    <property type="match status" value="1"/>
</dbReference>
<name>SOMA_HETFO</name>
<evidence type="ECO:0000250" key="1"/>
<evidence type="ECO:0000305" key="2"/>
<accession>Q9W6R8</accession>
<proteinExistence type="evidence at transcript level"/>